<dbReference type="EMBL" id="AAFI02000199">
    <property type="protein sequence ID" value="EAL60926.1"/>
    <property type="molecule type" value="Genomic_DNA"/>
</dbReference>
<dbReference type="RefSeq" id="XP_629341.1">
    <property type="nucleotide sequence ID" value="XM_629339.1"/>
</dbReference>
<dbReference type="SMR" id="Q54C78"/>
<dbReference type="FunCoup" id="Q54C78">
    <property type="interactions" value="364"/>
</dbReference>
<dbReference type="STRING" id="44689.Q54C78"/>
<dbReference type="GlyCosmos" id="Q54C78">
    <property type="glycosylation" value="5 sites, No reported glycans"/>
</dbReference>
<dbReference type="GlyGen" id="Q54C78">
    <property type="glycosylation" value="5 sites"/>
</dbReference>
<dbReference type="PaxDb" id="44689-DDB0304871"/>
<dbReference type="EnsemblProtists" id="EAL60926">
    <property type="protein sequence ID" value="EAL60926"/>
    <property type="gene ID" value="DDB_G0293148"/>
</dbReference>
<dbReference type="GeneID" id="8629065"/>
<dbReference type="KEGG" id="ddi:DDB_G0293148"/>
<dbReference type="dictyBase" id="DDB_G0293148">
    <property type="gene designation" value="expl9"/>
</dbReference>
<dbReference type="VEuPathDB" id="AmoebaDB:DDB_G0293148"/>
<dbReference type="eggNOG" id="ENOG502R9PZ">
    <property type="taxonomic scope" value="Eukaryota"/>
</dbReference>
<dbReference type="HOGENOM" id="CLU_038219_0_0_1"/>
<dbReference type="InParanoid" id="Q54C78"/>
<dbReference type="OMA" id="FEINNIM"/>
<dbReference type="PhylomeDB" id="Q54C78"/>
<dbReference type="PRO" id="PR:Q54C78"/>
<dbReference type="Proteomes" id="UP000002195">
    <property type="component" value="Chromosome 6"/>
</dbReference>
<dbReference type="GO" id="GO:0016020">
    <property type="term" value="C:membrane"/>
    <property type="evidence" value="ECO:0007669"/>
    <property type="project" value="UniProtKB-SubCell"/>
</dbReference>
<dbReference type="CDD" id="cd22271">
    <property type="entry name" value="DPBB_EXP_N-like"/>
    <property type="match status" value="1"/>
</dbReference>
<dbReference type="Gene3D" id="2.60.120.430">
    <property type="entry name" value="Galactose-binding lectin"/>
    <property type="match status" value="1"/>
</dbReference>
<dbReference type="Gene3D" id="2.40.40.10">
    <property type="entry name" value="RlpA-like domain"/>
    <property type="match status" value="1"/>
</dbReference>
<dbReference type="InterPro" id="IPR007112">
    <property type="entry name" value="Expansin/allergen_DPBB_dom"/>
</dbReference>
<dbReference type="InterPro" id="IPR051477">
    <property type="entry name" value="Expansin_CellWall"/>
</dbReference>
<dbReference type="InterPro" id="IPR036908">
    <property type="entry name" value="RlpA-like_sf"/>
</dbReference>
<dbReference type="PANTHER" id="PTHR31836">
    <property type="match status" value="1"/>
</dbReference>
<dbReference type="PANTHER" id="PTHR31836:SF3">
    <property type="entry name" value="EXPANSIN-LIKE PROTEIN 9"/>
    <property type="match status" value="1"/>
</dbReference>
<dbReference type="SUPFAM" id="SSF50685">
    <property type="entry name" value="Barwin-like endoglucanases"/>
    <property type="match status" value="1"/>
</dbReference>
<dbReference type="PROSITE" id="PS50842">
    <property type="entry name" value="EXPANSIN_EG45"/>
    <property type="match status" value="1"/>
</dbReference>
<reference key="1">
    <citation type="journal article" date="2005" name="Nature">
        <title>The genome of the social amoeba Dictyostelium discoideum.</title>
        <authorList>
            <person name="Eichinger L."/>
            <person name="Pachebat J.A."/>
            <person name="Gloeckner G."/>
            <person name="Rajandream M.A."/>
            <person name="Sucgang R."/>
            <person name="Berriman M."/>
            <person name="Song J."/>
            <person name="Olsen R."/>
            <person name="Szafranski K."/>
            <person name="Xu Q."/>
            <person name="Tunggal B."/>
            <person name="Kummerfeld S."/>
            <person name="Madera M."/>
            <person name="Konfortov B.A."/>
            <person name="Rivero F."/>
            <person name="Bankier A.T."/>
            <person name="Lehmann R."/>
            <person name="Hamlin N."/>
            <person name="Davies R."/>
            <person name="Gaudet P."/>
            <person name="Fey P."/>
            <person name="Pilcher K."/>
            <person name="Chen G."/>
            <person name="Saunders D."/>
            <person name="Sodergren E.J."/>
            <person name="Davis P."/>
            <person name="Kerhornou A."/>
            <person name="Nie X."/>
            <person name="Hall N."/>
            <person name="Anjard C."/>
            <person name="Hemphill L."/>
            <person name="Bason N."/>
            <person name="Farbrother P."/>
            <person name="Desany B."/>
            <person name="Just E."/>
            <person name="Morio T."/>
            <person name="Rost R."/>
            <person name="Churcher C.M."/>
            <person name="Cooper J."/>
            <person name="Haydock S."/>
            <person name="van Driessche N."/>
            <person name="Cronin A."/>
            <person name="Goodhead I."/>
            <person name="Muzny D.M."/>
            <person name="Mourier T."/>
            <person name="Pain A."/>
            <person name="Lu M."/>
            <person name="Harper D."/>
            <person name="Lindsay R."/>
            <person name="Hauser H."/>
            <person name="James K.D."/>
            <person name="Quiles M."/>
            <person name="Madan Babu M."/>
            <person name="Saito T."/>
            <person name="Buchrieser C."/>
            <person name="Wardroper A."/>
            <person name="Felder M."/>
            <person name="Thangavelu M."/>
            <person name="Johnson D."/>
            <person name="Knights A."/>
            <person name="Loulseged H."/>
            <person name="Mungall K.L."/>
            <person name="Oliver K."/>
            <person name="Price C."/>
            <person name="Quail M.A."/>
            <person name="Urushihara H."/>
            <person name="Hernandez J."/>
            <person name="Rabbinowitsch E."/>
            <person name="Steffen D."/>
            <person name="Sanders M."/>
            <person name="Ma J."/>
            <person name="Kohara Y."/>
            <person name="Sharp S."/>
            <person name="Simmonds M.N."/>
            <person name="Spiegler S."/>
            <person name="Tivey A."/>
            <person name="Sugano S."/>
            <person name="White B."/>
            <person name="Walker D."/>
            <person name="Woodward J.R."/>
            <person name="Winckler T."/>
            <person name="Tanaka Y."/>
            <person name="Shaulsky G."/>
            <person name="Schleicher M."/>
            <person name="Weinstock G.M."/>
            <person name="Rosenthal A."/>
            <person name="Cox E.C."/>
            <person name="Chisholm R.L."/>
            <person name="Gibbs R.A."/>
            <person name="Loomis W.F."/>
            <person name="Platzer M."/>
            <person name="Kay R.R."/>
            <person name="Williams J.G."/>
            <person name="Dear P.H."/>
            <person name="Noegel A.A."/>
            <person name="Barrell B.G."/>
            <person name="Kuspa A."/>
        </authorList>
    </citation>
    <scope>NUCLEOTIDE SEQUENCE [LARGE SCALE GENOMIC DNA]</scope>
    <source>
        <strain>AX4</strain>
    </source>
</reference>
<sequence length="535" mass="57794">MKINKNNYFKIIIFIIYVIINLINASDNVKLSNCGQARAEPTFKQSENGGQCQLPPPSIGTAALSLSAFNGGARCGQCYELTGPLGKTVVMVTDGCNSGEACTQKDLFNFIISNKDFDKIGNSSSYVNIYSLGYQEVSCGFLGNIKIKFGGSLGHNGKVDYSYYFTVSFSNFNIGIKQVQILGTGMVSYMKLKRSLGGFTWNQESGGSKLQFPATLVLTGVDGQIISYKFRQPPANIAIDMKKQFIPQVGLLSSKFNQSEICGMGNVPEYIYEDSLTFGWIVSNSWRFNVFNLSSQDTDDNPTLGESVIKMDLAANGGLAFTREGGFQTKYLESLKVMIKVLPPTNSLQCFFGASGIYVIPGPLGGDWQEISIPISVLKPQKVEYSLSFYNNQGQSITMWIDNIKWIFSPEAPPTPLIITDPTVTPPPLPQSIVTAAAGVVGLNSIGITSNKGGVANLVDGSSNDDDGTGGTGGGASNKVGKRVDGEDGDNFMGGNNAFSYYNDDNSSNILLFSFNITLTFLLLSLIINILLLLF</sequence>
<feature type="signal peptide" evidence="2">
    <location>
        <begin position="1"/>
        <end position="25"/>
    </location>
</feature>
<feature type="chain" id="PRO_0000383954" description="Expansin-like protein 9">
    <location>
        <begin position="26"/>
        <end position="535"/>
    </location>
</feature>
<feature type="topological domain" description="Extracellular" evidence="2">
    <location>
        <begin position="26"/>
        <end position="514"/>
    </location>
</feature>
<feature type="transmembrane region" description="Helical" evidence="2">
    <location>
        <begin position="515"/>
        <end position="535"/>
    </location>
</feature>
<feature type="domain" description="Expansin-like EG45" evidence="3">
    <location>
        <begin position="31"/>
        <end position="144"/>
    </location>
</feature>
<feature type="region of interest" description="Disordered" evidence="4">
    <location>
        <begin position="459"/>
        <end position="487"/>
    </location>
</feature>
<feature type="glycosylation site" description="N-linked (GlcNAc...) asparagine" evidence="2">
    <location>
        <position position="24"/>
    </location>
</feature>
<feature type="glycosylation site" description="N-linked (GlcNAc...) asparagine" evidence="2">
    <location>
        <position position="122"/>
    </location>
</feature>
<feature type="glycosylation site" description="N-linked (GlcNAc...) asparagine" evidence="2">
    <location>
        <position position="257"/>
    </location>
</feature>
<feature type="glycosylation site" description="N-linked (GlcNAc...) asparagine" evidence="2">
    <location>
        <position position="292"/>
    </location>
</feature>
<feature type="glycosylation site" description="N-linked (GlcNAc...) asparagine" evidence="2">
    <location>
        <position position="506"/>
    </location>
</feature>
<feature type="disulfide bond" evidence="3">
    <location>
        <begin position="34"/>
        <end position="75"/>
    </location>
</feature>
<feature type="disulfide bond" evidence="3">
    <location>
        <begin position="78"/>
        <end position="139"/>
    </location>
</feature>
<accession>Q54C78</accession>
<proteinExistence type="inferred from homology"/>
<keyword id="KW-1015">Disulfide bond</keyword>
<keyword id="KW-0325">Glycoprotein</keyword>
<keyword id="KW-0472">Membrane</keyword>
<keyword id="KW-1185">Reference proteome</keyword>
<keyword id="KW-0732">Signal</keyword>
<keyword id="KW-0812">Transmembrane</keyword>
<keyword id="KW-1133">Transmembrane helix</keyword>
<comment type="function">
    <text evidence="1">May serve to lubricate the movement of the cellulose microfibrils during cell growth and wall extension and/or may serve to maintain the fluid state of the slug cell wall.</text>
</comment>
<comment type="subcellular location">
    <subcellularLocation>
        <location evidence="5">Membrane</location>
        <topology evidence="5">Single-pass type I membrane protein</topology>
    </subcellularLocation>
</comment>
<comment type="similarity">
    <text evidence="5">Belongs to the expansin family. Expansin A subfamily.</text>
</comment>
<name>EXPL9_DICDI</name>
<gene>
    <name type="primary">expl9</name>
    <name type="ORF">DDB_G0293148</name>
</gene>
<protein>
    <recommendedName>
        <fullName>Expansin-like protein 9</fullName>
        <shortName>Ddexpl9</shortName>
    </recommendedName>
</protein>
<organism>
    <name type="scientific">Dictyostelium discoideum</name>
    <name type="common">Social amoeba</name>
    <dbReference type="NCBI Taxonomy" id="44689"/>
    <lineage>
        <taxon>Eukaryota</taxon>
        <taxon>Amoebozoa</taxon>
        <taxon>Evosea</taxon>
        <taxon>Eumycetozoa</taxon>
        <taxon>Dictyostelia</taxon>
        <taxon>Dictyosteliales</taxon>
        <taxon>Dictyosteliaceae</taxon>
        <taxon>Dictyostelium</taxon>
    </lineage>
</organism>
<evidence type="ECO:0000250" key="1"/>
<evidence type="ECO:0000255" key="2"/>
<evidence type="ECO:0000255" key="3">
    <source>
        <dbReference type="PROSITE-ProRule" id="PRU00079"/>
    </source>
</evidence>
<evidence type="ECO:0000256" key="4">
    <source>
        <dbReference type="SAM" id="MobiDB-lite"/>
    </source>
</evidence>
<evidence type="ECO:0000305" key="5"/>